<dbReference type="EC" id="3.5.1.88" evidence="1"/>
<dbReference type="EMBL" id="FM211187">
    <property type="protein sequence ID" value="CAR69211.1"/>
    <property type="molecule type" value="Genomic_DNA"/>
</dbReference>
<dbReference type="RefSeq" id="WP_001272961.1">
    <property type="nucleotide sequence ID" value="NC_011900.1"/>
</dbReference>
<dbReference type="SMR" id="B8ZL02"/>
<dbReference type="GeneID" id="45218269"/>
<dbReference type="KEGG" id="sne:SPN23F14200"/>
<dbReference type="HOGENOM" id="CLU_061901_4_0_9"/>
<dbReference type="GO" id="GO:0046872">
    <property type="term" value="F:metal ion binding"/>
    <property type="evidence" value="ECO:0007669"/>
    <property type="project" value="UniProtKB-KW"/>
</dbReference>
<dbReference type="GO" id="GO:0042586">
    <property type="term" value="F:peptide deformylase activity"/>
    <property type="evidence" value="ECO:0007669"/>
    <property type="project" value="UniProtKB-UniRule"/>
</dbReference>
<dbReference type="GO" id="GO:0043686">
    <property type="term" value="P:co-translational protein modification"/>
    <property type="evidence" value="ECO:0007669"/>
    <property type="project" value="TreeGrafter"/>
</dbReference>
<dbReference type="GO" id="GO:0006412">
    <property type="term" value="P:translation"/>
    <property type="evidence" value="ECO:0007669"/>
    <property type="project" value="UniProtKB-UniRule"/>
</dbReference>
<dbReference type="CDD" id="cd00487">
    <property type="entry name" value="Pep_deformylase"/>
    <property type="match status" value="1"/>
</dbReference>
<dbReference type="FunFam" id="3.90.45.10:FF:000002">
    <property type="entry name" value="Peptide deformylase"/>
    <property type="match status" value="1"/>
</dbReference>
<dbReference type="Gene3D" id="3.90.45.10">
    <property type="entry name" value="Peptide deformylase"/>
    <property type="match status" value="1"/>
</dbReference>
<dbReference type="HAMAP" id="MF_00163">
    <property type="entry name" value="Pep_deformylase"/>
    <property type="match status" value="1"/>
</dbReference>
<dbReference type="InterPro" id="IPR023635">
    <property type="entry name" value="Peptide_deformylase"/>
</dbReference>
<dbReference type="InterPro" id="IPR036821">
    <property type="entry name" value="Peptide_deformylase_sf"/>
</dbReference>
<dbReference type="NCBIfam" id="TIGR00079">
    <property type="entry name" value="pept_deformyl"/>
    <property type="match status" value="1"/>
</dbReference>
<dbReference type="PANTHER" id="PTHR10458">
    <property type="entry name" value="PEPTIDE DEFORMYLASE"/>
    <property type="match status" value="1"/>
</dbReference>
<dbReference type="PANTHER" id="PTHR10458:SF8">
    <property type="entry name" value="PEPTIDE DEFORMYLASE 2"/>
    <property type="match status" value="1"/>
</dbReference>
<dbReference type="Pfam" id="PF01327">
    <property type="entry name" value="Pep_deformylase"/>
    <property type="match status" value="1"/>
</dbReference>
<dbReference type="PIRSF" id="PIRSF004749">
    <property type="entry name" value="Pep_def"/>
    <property type="match status" value="1"/>
</dbReference>
<dbReference type="PRINTS" id="PR01576">
    <property type="entry name" value="PDEFORMYLASE"/>
</dbReference>
<dbReference type="SUPFAM" id="SSF56420">
    <property type="entry name" value="Peptide deformylase"/>
    <property type="match status" value="1"/>
</dbReference>
<sequence length="203" mass="22692">MSAIERITKAAHLIDMNDIIREGNPTLRTVAEEVTFPLSDQEIILGEKMMQFLKHSQDPVMAEKMGLRGGVGLAAPQLDISKRIIAVLVPNIVEEGETPQEAYDLEAIMYNPKIVSHSVQDAALGEGEGCLSVDRNVPGYVVRHARVTVDYFDKDGEKHRIKLKGYNSIVVQHEIDHINGIMFYDRINEKDPFAVKDGLLILE</sequence>
<name>DEF_STRPJ</name>
<feature type="chain" id="PRO_1000200748" description="Peptide deformylase">
    <location>
        <begin position="1"/>
        <end position="203"/>
    </location>
</feature>
<feature type="active site" evidence="1">
    <location>
        <position position="174"/>
    </location>
</feature>
<feature type="binding site" evidence="1">
    <location>
        <position position="130"/>
    </location>
    <ligand>
        <name>Fe cation</name>
        <dbReference type="ChEBI" id="CHEBI:24875"/>
    </ligand>
</feature>
<feature type="binding site" evidence="1">
    <location>
        <position position="173"/>
    </location>
    <ligand>
        <name>Fe cation</name>
        <dbReference type="ChEBI" id="CHEBI:24875"/>
    </ligand>
</feature>
<feature type="binding site" evidence="1">
    <location>
        <position position="177"/>
    </location>
    <ligand>
        <name>Fe cation</name>
        <dbReference type="ChEBI" id="CHEBI:24875"/>
    </ligand>
</feature>
<comment type="function">
    <text evidence="1">Removes the formyl group from the N-terminal Met of newly synthesized proteins. Requires at least a dipeptide for an efficient rate of reaction. N-terminal L-methionine is a prerequisite for activity but the enzyme has broad specificity at other positions.</text>
</comment>
<comment type="catalytic activity">
    <reaction evidence="1">
        <text>N-terminal N-formyl-L-methionyl-[peptide] + H2O = N-terminal L-methionyl-[peptide] + formate</text>
        <dbReference type="Rhea" id="RHEA:24420"/>
        <dbReference type="Rhea" id="RHEA-COMP:10639"/>
        <dbReference type="Rhea" id="RHEA-COMP:10640"/>
        <dbReference type="ChEBI" id="CHEBI:15377"/>
        <dbReference type="ChEBI" id="CHEBI:15740"/>
        <dbReference type="ChEBI" id="CHEBI:49298"/>
        <dbReference type="ChEBI" id="CHEBI:64731"/>
        <dbReference type="EC" id="3.5.1.88"/>
    </reaction>
</comment>
<comment type="cofactor">
    <cofactor evidence="1">
        <name>Fe(2+)</name>
        <dbReference type="ChEBI" id="CHEBI:29033"/>
    </cofactor>
    <text evidence="1">Binds 1 Fe(2+) ion.</text>
</comment>
<comment type="similarity">
    <text evidence="1">Belongs to the polypeptide deformylase family.</text>
</comment>
<accession>B8ZL02</accession>
<gene>
    <name evidence="1" type="primary">def</name>
    <name type="ordered locus">SPN23F14200</name>
</gene>
<evidence type="ECO:0000255" key="1">
    <source>
        <dbReference type="HAMAP-Rule" id="MF_00163"/>
    </source>
</evidence>
<reference key="1">
    <citation type="journal article" date="2009" name="J. Bacteriol.">
        <title>Role of conjugative elements in the evolution of the multidrug-resistant pandemic clone Streptococcus pneumoniae Spain23F ST81.</title>
        <authorList>
            <person name="Croucher N.J."/>
            <person name="Walker D."/>
            <person name="Romero P."/>
            <person name="Lennard N."/>
            <person name="Paterson G.K."/>
            <person name="Bason N.C."/>
            <person name="Mitchell A.M."/>
            <person name="Quail M.A."/>
            <person name="Andrew P.W."/>
            <person name="Parkhill J."/>
            <person name="Bentley S.D."/>
            <person name="Mitchell T.J."/>
        </authorList>
    </citation>
    <scope>NUCLEOTIDE SEQUENCE [LARGE SCALE GENOMIC DNA]</scope>
    <source>
        <strain>ATCC 700669 / Spain 23F-1</strain>
    </source>
</reference>
<keyword id="KW-0378">Hydrolase</keyword>
<keyword id="KW-0408">Iron</keyword>
<keyword id="KW-0479">Metal-binding</keyword>
<keyword id="KW-0648">Protein biosynthesis</keyword>
<protein>
    <recommendedName>
        <fullName evidence="1">Peptide deformylase</fullName>
        <shortName evidence="1">PDF</shortName>
        <ecNumber evidence="1">3.5.1.88</ecNumber>
    </recommendedName>
    <alternativeName>
        <fullName evidence="1">Polypeptide deformylase</fullName>
    </alternativeName>
</protein>
<proteinExistence type="inferred from homology"/>
<organism>
    <name type="scientific">Streptococcus pneumoniae (strain ATCC 700669 / Spain 23F-1)</name>
    <dbReference type="NCBI Taxonomy" id="561276"/>
    <lineage>
        <taxon>Bacteria</taxon>
        <taxon>Bacillati</taxon>
        <taxon>Bacillota</taxon>
        <taxon>Bacilli</taxon>
        <taxon>Lactobacillales</taxon>
        <taxon>Streptococcaceae</taxon>
        <taxon>Streptococcus</taxon>
    </lineage>
</organism>